<feature type="chain" id="PRO_1000123830" description="ATP-dependent Clp protease ATP-binding subunit ClpX">
    <location>
        <begin position="1"/>
        <end position="431"/>
    </location>
</feature>
<feature type="domain" description="ClpX-type ZB" evidence="2">
    <location>
        <begin position="1"/>
        <end position="54"/>
    </location>
</feature>
<feature type="binding site" evidence="2">
    <location>
        <position position="13"/>
    </location>
    <ligand>
        <name>Zn(2+)</name>
        <dbReference type="ChEBI" id="CHEBI:29105"/>
    </ligand>
</feature>
<feature type="binding site" evidence="2">
    <location>
        <position position="16"/>
    </location>
    <ligand>
        <name>Zn(2+)</name>
        <dbReference type="ChEBI" id="CHEBI:29105"/>
    </ligand>
</feature>
<feature type="binding site" evidence="2">
    <location>
        <position position="35"/>
    </location>
    <ligand>
        <name>Zn(2+)</name>
        <dbReference type="ChEBI" id="CHEBI:29105"/>
    </ligand>
</feature>
<feature type="binding site" evidence="2">
    <location>
        <position position="38"/>
    </location>
    <ligand>
        <name>Zn(2+)</name>
        <dbReference type="ChEBI" id="CHEBI:29105"/>
    </ligand>
</feature>
<feature type="binding site" evidence="1">
    <location>
        <begin position="132"/>
        <end position="139"/>
    </location>
    <ligand>
        <name>ATP</name>
        <dbReference type="ChEBI" id="CHEBI:30616"/>
    </ligand>
</feature>
<evidence type="ECO:0000255" key="1">
    <source>
        <dbReference type="HAMAP-Rule" id="MF_00175"/>
    </source>
</evidence>
<evidence type="ECO:0000255" key="2">
    <source>
        <dbReference type="PROSITE-ProRule" id="PRU01250"/>
    </source>
</evidence>
<accession>C3PI25</accession>
<dbReference type="EMBL" id="CP001601">
    <property type="protein sequence ID" value="ACP33479.1"/>
    <property type="molecule type" value="Genomic_DNA"/>
</dbReference>
<dbReference type="RefSeq" id="WP_010190911.1">
    <property type="nucleotide sequence ID" value="NZ_ACLH01000093.1"/>
</dbReference>
<dbReference type="SMR" id="C3PI25"/>
<dbReference type="STRING" id="548476.cauri_1886"/>
<dbReference type="GeneID" id="31924521"/>
<dbReference type="KEGG" id="car:cauri_1886"/>
<dbReference type="eggNOG" id="COG1219">
    <property type="taxonomic scope" value="Bacteria"/>
</dbReference>
<dbReference type="HOGENOM" id="CLU_014218_8_2_11"/>
<dbReference type="OrthoDB" id="9804062at2"/>
<dbReference type="Proteomes" id="UP000002077">
    <property type="component" value="Chromosome"/>
</dbReference>
<dbReference type="GO" id="GO:0009376">
    <property type="term" value="C:HslUV protease complex"/>
    <property type="evidence" value="ECO:0007669"/>
    <property type="project" value="TreeGrafter"/>
</dbReference>
<dbReference type="GO" id="GO:0005524">
    <property type="term" value="F:ATP binding"/>
    <property type="evidence" value="ECO:0007669"/>
    <property type="project" value="UniProtKB-UniRule"/>
</dbReference>
<dbReference type="GO" id="GO:0016887">
    <property type="term" value="F:ATP hydrolysis activity"/>
    <property type="evidence" value="ECO:0007669"/>
    <property type="project" value="InterPro"/>
</dbReference>
<dbReference type="GO" id="GO:0140662">
    <property type="term" value="F:ATP-dependent protein folding chaperone"/>
    <property type="evidence" value="ECO:0007669"/>
    <property type="project" value="InterPro"/>
</dbReference>
<dbReference type="GO" id="GO:0046983">
    <property type="term" value="F:protein dimerization activity"/>
    <property type="evidence" value="ECO:0007669"/>
    <property type="project" value="InterPro"/>
</dbReference>
<dbReference type="GO" id="GO:0051082">
    <property type="term" value="F:unfolded protein binding"/>
    <property type="evidence" value="ECO:0007669"/>
    <property type="project" value="UniProtKB-UniRule"/>
</dbReference>
<dbReference type="GO" id="GO:0008270">
    <property type="term" value="F:zinc ion binding"/>
    <property type="evidence" value="ECO:0007669"/>
    <property type="project" value="InterPro"/>
</dbReference>
<dbReference type="GO" id="GO:0051301">
    <property type="term" value="P:cell division"/>
    <property type="evidence" value="ECO:0007669"/>
    <property type="project" value="TreeGrafter"/>
</dbReference>
<dbReference type="GO" id="GO:0051603">
    <property type="term" value="P:proteolysis involved in protein catabolic process"/>
    <property type="evidence" value="ECO:0007669"/>
    <property type="project" value="TreeGrafter"/>
</dbReference>
<dbReference type="CDD" id="cd19497">
    <property type="entry name" value="RecA-like_ClpX"/>
    <property type="match status" value="1"/>
</dbReference>
<dbReference type="FunFam" id="1.10.8.60:FF:000002">
    <property type="entry name" value="ATP-dependent Clp protease ATP-binding subunit ClpX"/>
    <property type="match status" value="1"/>
</dbReference>
<dbReference type="FunFam" id="3.40.50.300:FF:000005">
    <property type="entry name" value="ATP-dependent Clp protease ATP-binding subunit ClpX"/>
    <property type="match status" value="1"/>
</dbReference>
<dbReference type="Gene3D" id="1.10.8.60">
    <property type="match status" value="1"/>
</dbReference>
<dbReference type="Gene3D" id="6.20.220.10">
    <property type="entry name" value="ClpX chaperone, C4-type zinc finger domain"/>
    <property type="match status" value="1"/>
</dbReference>
<dbReference type="Gene3D" id="3.40.50.300">
    <property type="entry name" value="P-loop containing nucleotide triphosphate hydrolases"/>
    <property type="match status" value="1"/>
</dbReference>
<dbReference type="HAMAP" id="MF_00175">
    <property type="entry name" value="ClpX"/>
    <property type="match status" value="1"/>
</dbReference>
<dbReference type="InterPro" id="IPR003593">
    <property type="entry name" value="AAA+_ATPase"/>
</dbReference>
<dbReference type="InterPro" id="IPR050052">
    <property type="entry name" value="ATP-dep_Clp_protease_ClpX"/>
</dbReference>
<dbReference type="InterPro" id="IPR003959">
    <property type="entry name" value="ATPase_AAA_core"/>
</dbReference>
<dbReference type="InterPro" id="IPR019489">
    <property type="entry name" value="Clp_ATPase_C"/>
</dbReference>
<dbReference type="InterPro" id="IPR004487">
    <property type="entry name" value="Clp_protease_ATP-bd_su_ClpX"/>
</dbReference>
<dbReference type="InterPro" id="IPR046425">
    <property type="entry name" value="ClpX_bact"/>
</dbReference>
<dbReference type="InterPro" id="IPR027417">
    <property type="entry name" value="P-loop_NTPase"/>
</dbReference>
<dbReference type="InterPro" id="IPR010603">
    <property type="entry name" value="Znf_CppX_C4"/>
</dbReference>
<dbReference type="InterPro" id="IPR038366">
    <property type="entry name" value="Znf_CppX_C4_sf"/>
</dbReference>
<dbReference type="NCBIfam" id="TIGR00382">
    <property type="entry name" value="clpX"/>
    <property type="match status" value="1"/>
</dbReference>
<dbReference type="NCBIfam" id="NF003745">
    <property type="entry name" value="PRK05342.1"/>
    <property type="match status" value="1"/>
</dbReference>
<dbReference type="PANTHER" id="PTHR48102:SF7">
    <property type="entry name" value="ATP-DEPENDENT CLP PROTEASE ATP-BINDING SUBUNIT CLPX-LIKE, MITOCHONDRIAL"/>
    <property type="match status" value="1"/>
</dbReference>
<dbReference type="PANTHER" id="PTHR48102">
    <property type="entry name" value="ATP-DEPENDENT CLP PROTEASE ATP-BINDING SUBUNIT CLPX-LIKE, MITOCHONDRIAL-RELATED"/>
    <property type="match status" value="1"/>
</dbReference>
<dbReference type="Pfam" id="PF07724">
    <property type="entry name" value="AAA_2"/>
    <property type="match status" value="1"/>
</dbReference>
<dbReference type="Pfam" id="PF10431">
    <property type="entry name" value="ClpB_D2-small"/>
    <property type="match status" value="1"/>
</dbReference>
<dbReference type="Pfam" id="PF06689">
    <property type="entry name" value="zf-C4_ClpX"/>
    <property type="match status" value="1"/>
</dbReference>
<dbReference type="SMART" id="SM00382">
    <property type="entry name" value="AAA"/>
    <property type="match status" value="1"/>
</dbReference>
<dbReference type="SMART" id="SM01086">
    <property type="entry name" value="ClpB_D2-small"/>
    <property type="match status" value="1"/>
</dbReference>
<dbReference type="SMART" id="SM00994">
    <property type="entry name" value="zf-C4_ClpX"/>
    <property type="match status" value="1"/>
</dbReference>
<dbReference type="SUPFAM" id="SSF57716">
    <property type="entry name" value="Glucocorticoid receptor-like (DNA-binding domain)"/>
    <property type="match status" value="1"/>
</dbReference>
<dbReference type="SUPFAM" id="SSF52540">
    <property type="entry name" value="P-loop containing nucleoside triphosphate hydrolases"/>
    <property type="match status" value="1"/>
</dbReference>
<dbReference type="PROSITE" id="PS51902">
    <property type="entry name" value="CLPX_ZB"/>
    <property type="match status" value="1"/>
</dbReference>
<name>CLPX_CORA7</name>
<organism>
    <name type="scientific">Corynebacterium aurimucosum (strain ATCC 700975 / DSM 44827 / CIP 107346 / CN-1)</name>
    <name type="common">Corynebacterium nigricans</name>
    <dbReference type="NCBI Taxonomy" id="548476"/>
    <lineage>
        <taxon>Bacteria</taxon>
        <taxon>Bacillati</taxon>
        <taxon>Actinomycetota</taxon>
        <taxon>Actinomycetes</taxon>
        <taxon>Mycobacteriales</taxon>
        <taxon>Corynebacteriaceae</taxon>
        <taxon>Corynebacterium</taxon>
    </lineage>
</organism>
<gene>
    <name evidence="1" type="primary">clpX</name>
    <name type="ordered locus">cauri_1886</name>
</gene>
<keyword id="KW-0067">ATP-binding</keyword>
<keyword id="KW-0143">Chaperone</keyword>
<keyword id="KW-0479">Metal-binding</keyword>
<keyword id="KW-0547">Nucleotide-binding</keyword>
<keyword id="KW-1185">Reference proteome</keyword>
<keyword id="KW-0862">Zinc</keyword>
<sequence length="431" mass="47463">MARMQESADLLKCSFCGKSQKQVKKLIAGGGVYICDECIELCNEIIEEELGAAQAEADEEKEMRLPRPSEISAFLDKYVIGQDQAKRVLSVAVYNHYKRIKAEEAAGLEGRRKKAQDEEVEISKSNILMLGPTGSGKTYLAQTLARLLDVPFAIADATSLTEAGYVGEDVENILLKLLQAADFDVERAQHGIIYVDEVDKISRKSENPSITRDVSGEGVQQALLKILEGTVAAIPPQGGRKHPNQEFIQLDTTNILFIVAGAFAGLDKVISERVGKKGVGFGAKLETKDEKESVDFFSQVRPEDLVKFGLIPEFIGRLPVVATVDNLDRESLVKVLVEPKNSLVKQYQRLFSMDGAELHFEDEALEAIAELALERKTGARGLRAIMEELLVPIMYDLPDREDIASVHITQDCVTDGGEPEFVYSDEAKESA</sequence>
<reference key="1">
    <citation type="journal article" date="2010" name="BMC Genomics">
        <title>Complete genome sequence and lifestyle of black-pigmented Corynebacterium aurimucosum ATCC 700975 (formerly C. nigricans CN-1) isolated from a vaginal swab of a woman with spontaneous abortion.</title>
        <authorList>
            <person name="Trost E."/>
            <person name="Gotker S."/>
            <person name="Schneider J."/>
            <person name="Schneiker-Bekel S."/>
            <person name="Szczepanowski R."/>
            <person name="Tilker A."/>
            <person name="Viehoever P."/>
            <person name="Arnold W."/>
            <person name="Bekel T."/>
            <person name="Blom J."/>
            <person name="Gartemann K.H."/>
            <person name="Linke B."/>
            <person name="Goesmann A."/>
            <person name="Puhler A."/>
            <person name="Shukla S.K."/>
            <person name="Tauch A."/>
        </authorList>
    </citation>
    <scope>NUCLEOTIDE SEQUENCE [LARGE SCALE GENOMIC DNA]</scope>
    <source>
        <strain>ATCC 700975 / DSM 44827 / CIP 107346 / CN-1</strain>
    </source>
</reference>
<protein>
    <recommendedName>
        <fullName evidence="1">ATP-dependent Clp protease ATP-binding subunit ClpX</fullName>
    </recommendedName>
</protein>
<proteinExistence type="inferred from homology"/>
<comment type="function">
    <text evidence="1">ATP-dependent specificity component of the Clp protease. It directs the protease to specific substrates. Can perform chaperone functions in the absence of ClpP.</text>
</comment>
<comment type="subunit">
    <text evidence="1">Component of the ClpX-ClpP complex. Forms a hexameric ring that, in the presence of ATP, binds to fourteen ClpP subunits assembled into a disk-like structure with a central cavity, resembling the structure of eukaryotic proteasomes.</text>
</comment>
<comment type="similarity">
    <text evidence="1">Belongs to the ClpX chaperone family.</text>
</comment>